<reference key="1">
    <citation type="journal article" date="1998" name="Nature">
        <title>The complete genome of the hyperthermophilic bacterium Aquifex aeolicus.</title>
        <authorList>
            <person name="Deckert G."/>
            <person name="Warren P.V."/>
            <person name="Gaasterland T."/>
            <person name="Young W.G."/>
            <person name="Lenox A.L."/>
            <person name="Graham D.E."/>
            <person name="Overbeek R."/>
            <person name="Snead M.A."/>
            <person name="Keller M."/>
            <person name="Aujay M."/>
            <person name="Huber R."/>
            <person name="Feldman R.A."/>
            <person name="Short J.M."/>
            <person name="Olsen G.J."/>
            <person name="Swanson R.V."/>
        </authorList>
    </citation>
    <scope>NUCLEOTIDE SEQUENCE [LARGE SCALE GENOMIC DNA]</scope>
    <source>
        <strain>VF5</strain>
    </source>
</reference>
<protein>
    <recommendedName>
        <fullName>Uncharacterized protein aq_aa01</fullName>
    </recommendedName>
</protein>
<name>YZ01_AQUAE</name>
<gene>
    <name type="ordered locus">aq_aa01</name>
</gene>
<accession>O66398</accession>
<organism>
    <name type="scientific">Aquifex aeolicus (strain VF5)</name>
    <dbReference type="NCBI Taxonomy" id="224324"/>
    <lineage>
        <taxon>Bacteria</taxon>
        <taxon>Pseudomonadati</taxon>
        <taxon>Aquificota</taxon>
        <taxon>Aquificia</taxon>
        <taxon>Aquificales</taxon>
        <taxon>Aquificaceae</taxon>
        <taxon>Aquifex</taxon>
    </lineage>
</organism>
<feature type="chain" id="PRO_0000186979" description="Uncharacterized protein aq_aa01">
    <location>
        <begin position="1"/>
        <end position="133"/>
    </location>
</feature>
<geneLocation type="plasmid">
    <name>ece1</name>
</geneLocation>
<keyword id="KW-0614">Plasmid</keyword>
<keyword id="KW-1185">Reference proteome</keyword>
<proteinExistence type="predicted"/>
<dbReference type="EMBL" id="AE000667">
    <property type="protein sequence ID" value="AAC07950.1"/>
    <property type="molecule type" value="Genomic_DNA"/>
</dbReference>
<dbReference type="SMR" id="O66398"/>
<dbReference type="EnsemblBacteria" id="AAC07950">
    <property type="protein sequence ID" value="AAC07950"/>
    <property type="gene ID" value="aq_aa01"/>
</dbReference>
<dbReference type="HOGENOM" id="CLU_1902321_0_0_0"/>
<dbReference type="InParanoid" id="O66398"/>
<dbReference type="Proteomes" id="UP000000798">
    <property type="component" value="Plasmid ece1"/>
</dbReference>
<sequence length="133" mass="15783">MPEGVEAIEVLVPIYGIESLLTRLKYKQIIDELDYLLKTFKALAQSSRVIIMKPKSEKSWTRVYYLEDLSWCVILGRGGIITSFRVEKDWFKDRLEFYREKLGYEPYGGSPSEELKRSAKRIYDVCRRFRERS</sequence>